<feature type="chain" id="PRO_0000060092" description="Maltose/maltodextrin transport system permease protein MalG">
    <location>
        <begin position="1"/>
        <end position="296"/>
    </location>
</feature>
<feature type="topological domain" description="Cytoplasmic" evidence="2">
    <location>
        <begin position="1"/>
        <end position="12"/>
    </location>
</feature>
<feature type="transmembrane region" description="Helical" evidence="3">
    <location>
        <begin position="13"/>
        <end position="35"/>
    </location>
</feature>
<feature type="topological domain" description="Periplasmic" evidence="2">
    <location>
        <begin position="36"/>
        <end position="88"/>
    </location>
</feature>
<feature type="transmembrane region" description="Helical" evidence="3">
    <location>
        <begin position="89"/>
        <end position="111"/>
    </location>
</feature>
<feature type="topological domain" description="Cytoplasmic" evidence="2">
    <location>
        <begin position="112"/>
        <end position="123"/>
    </location>
</feature>
<feature type="transmembrane region" description="Helical" evidence="3">
    <location>
        <begin position="124"/>
        <end position="143"/>
    </location>
</feature>
<feature type="topological domain" description="Periplasmic" evidence="2">
    <location>
        <begin position="144"/>
        <end position="152"/>
    </location>
</feature>
<feature type="transmembrane region" description="Helical" evidence="3">
    <location>
        <begin position="153"/>
        <end position="175"/>
    </location>
</feature>
<feature type="topological domain" description="Cytoplasmic" evidence="2">
    <location>
        <begin position="176"/>
        <end position="204"/>
    </location>
</feature>
<feature type="transmembrane region" description="Helical" evidence="3">
    <location>
        <begin position="205"/>
        <end position="227"/>
    </location>
</feature>
<feature type="topological domain" description="Periplasmic" evidence="2">
    <location>
        <begin position="228"/>
        <end position="257"/>
    </location>
</feature>
<feature type="transmembrane region" description="Helical" evidence="3">
    <location>
        <begin position="258"/>
        <end position="280"/>
    </location>
</feature>
<feature type="topological domain" description="Cytoplasmic" evidence="2">
    <location>
        <begin position="281"/>
        <end position="296"/>
    </location>
</feature>
<feature type="domain" description="ABC transmembrane type-1" evidence="3">
    <location>
        <begin position="85"/>
        <end position="281"/>
    </location>
</feature>
<reference key="1">
    <citation type="journal article" date="2003" name="Genome Res.">
        <title>Comparative genome analysis of Vibrio vulnificus, a marine pathogen.</title>
        <authorList>
            <person name="Chen C.-Y."/>
            <person name="Wu K.-M."/>
            <person name="Chang Y.-C."/>
            <person name="Chang C.-H."/>
            <person name="Tsai H.-C."/>
            <person name="Liao T.-L."/>
            <person name="Liu Y.-M."/>
            <person name="Chen H.-J."/>
            <person name="Shen A.B.-T."/>
            <person name="Li J.-C."/>
            <person name="Su T.-L."/>
            <person name="Shao C.-P."/>
            <person name="Lee C.-T."/>
            <person name="Hor L.-I."/>
            <person name="Tsai S.-F."/>
        </authorList>
    </citation>
    <scope>NUCLEOTIDE SEQUENCE [LARGE SCALE GENOMIC DNA]</scope>
    <source>
        <strain>YJ016</strain>
    </source>
</reference>
<protein>
    <recommendedName>
        <fullName evidence="1">Maltose/maltodextrin transport system permease protein MalG</fullName>
    </recommendedName>
</protein>
<proteinExistence type="inferred from homology"/>
<name>MALG_VIBVY</name>
<gene>
    <name type="primary">malG</name>
    <name type="ordered locus">VVA0399</name>
</gene>
<keyword id="KW-0997">Cell inner membrane</keyword>
<keyword id="KW-1003">Cell membrane</keyword>
<keyword id="KW-0472">Membrane</keyword>
<keyword id="KW-0762">Sugar transport</keyword>
<keyword id="KW-0812">Transmembrane</keyword>
<keyword id="KW-1133">Transmembrane helix</keyword>
<keyword id="KW-0813">Transport</keyword>
<comment type="function">
    <text evidence="1">Part of the ABC transporter complex MalEFGK involved in maltose/maltodextrin import. Probably responsible for the translocation of the substrate across the membrane.</text>
</comment>
<comment type="subunit">
    <text evidence="1">The complex is composed of two ATP-binding proteins (MalK), two transmembrane proteins (MalG and MalF) and a solute-binding protein (MalE).</text>
</comment>
<comment type="subcellular location">
    <subcellularLocation>
        <location evidence="1">Cell inner membrane</location>
        <topology evidence="1">Multi-pass membrane protein</topology>
    </subcellularLocation>
</comment>
<comment type="similarity">
    <text evidence="4">Belongs to the binding-protein-dependent transport system permease family. MalFG subfamily.</text>
</comment>
<dbReference type="EMBL" id="BA000038">
    <property type="protein sequence ID" value="BAC96425.1"/>
    <property type="molecule type" value="Genomic_DNA"/>
</dbReference>
<dbReference type="RefSeq" id="WP_011082433.1">
    <property type="nucleotide sequence ID" value="NC_005140.1"/>
</dbReference>
<dbReference type="SMR" id="Q7MFC1"/>
<dbReference type="STRING" id="672.VV93_v1c33860"/>
<dbReference type="KEGG" id="vvy:VVA0399"/>
<dbReference type="eggNOG" id="COG3833">
    <property type="taxonomic scope" value="Bacteria"/>
</dbReference>
<dbReference type="HOGENOM" id="CLU_016047_1_2_6"/>
<dbReference type="Proteomes" id="UP000002675">
    <property type="component" value="Chromosome II"/>
</dbReference>
<dbReference type="GO" id="GO:0005886">
    <property type="term" value="C:plasma membrane"/>
    <property type="evidence" value="ECO:0007669"/>
    <property type="project" value="UniProtKB-SubCell"/>
</dbReference>
<dbReference type="GO" id="GO:0015423">
    <property type="term" value="F:ABC-type maltose transporter activity"/>
    <property type="evidence" value="ECO:0007669"/>
    <property type="project" value="TreeGrafter"/>
</dbReference>
<dbReference type="GO" id="GO:0042956">
    <property type="term" value="P:maltodextrin transmembrane transport"/>
    <property type="evidence" value="ECO:0007669"/>
    <property type="project" value="TreeGrafter"/>
</dbReference>
<dbReference type="CDD" id="cd06261">
    <property type="entry name" value="TM_PBP2"/>
    <property type="match status" value="1"/>
</dbReference>
<dbReference type="FunFam" id="1.10.3720.10:FF:000010">
    <property type="entry name" value="Maltose ABC transporter permease MalG"/>
    <property type="match status" value="1"/>
</dbReference>
<dbReference type="Gene3D" id="1.10.3720.10">
    <property type="entry name" value="MetI-like"/>
    <property type="match status" value="1"/>
</dbReference>
<dbReference type="InterPro" id="IPR050901">
    <property type="entry name" value="BP-dep_ABC_trans_perm"/>
</dbReference>
<dbReference type="InterPro" id="IPR000515">
    <property type="entry name" value="MetI-like"/>
</dbReference>
<dbReference type="InterPro" id="IPR035906">
    <property type="entry name" value="MetI-like_sf"/>
</dbReference>
<dbReference type="NCBIfam" id="NF008231">
    <property type="entry name" value="PRK10998.1"/>
    <property type="match status" value="1"/>
</dbReference>
<dbReference type="PANTHER" id="PTHR32243">
    <property type="entry name" value="MALTOSE TRANSPORT SYSTEM PERMEASE-RELATED"/>
    <property type="match status" value="1"/>
</dbReference>
<dbReference type="PANTHER" id="PTHR32243:SF50">
    <property type="entry name" value="MALTOSE_MALTODEXTRIN TRANSPORT SYSTEM PERMEASE PROTEIN MALG"/>
    <property type="match status" value="1"/>
</dbReference>
<dbReference type="Pfam" id="PF00528">
    <property type="entry name" value="BPD_transp_1"/>
    <property type="match status" value="1"/>
</dbReference>
<dbReference type="SUPFAM" id="SSF161098">
    <property type="entry name" value="MetI-like"/>
    <property type="match status" value="1"/>
</dbReference>
<dbReference type="PROSITE" id="PS50928">
    <property type="entry name" value="ABC_TM1"/>
    <property type="match status" value="1"/>
</dbReference>
<evidence type="ECO:0000250" key="1">
    <source>
        <dbReference type="UniProtKB" id="P68183"/>
    </source>
</evidence>
<evidence type="ECO:0000255" key="2"/>
<evidence type="ECO:0000255" key="3">
    <source>
        <dbReference type="PROSITE-ProRule" id="PRU00441"/>
    </source>
</evidence>
<evidence type="ECO:0000305" key="4"/>
<organism>
    <name type="scientific">Vibrio vulnificus (strain YJ016)</name>
    <dbReference type="NCBI Taxonomy" id="196600"/>
    <lineage>
        <taxon>Bacteria</taxon>
        <taxon>Pseudomonadati</taxon>
        <taxon>Pseudomonadota</taxon>
        <taxon>Gammaproteobacteria</taxon>
        <taxon>Vibrionales</taxon>
        <taxon>Vibrionaceae</taxon>
        <taxon>Vibrio</taxon>
    </lineage>
</organism>
<sequence length="296" mass="32147">MAMVQGKSLKYRVWATHIALWAFLSMIIFPLLMIVAISFREGNFATGSLIPDNPSLEHWKLALGFSVTNADGSVTPPPFPVLTWLWNSVKVAGITSILIVALSTTSAYAFARLRFKGKETILKAMMIFQMFPAVLALVALYALFDKLGQYIPFLGLNTHGGLIFSYLGGIALHVWTIKGYFETIDNSLEEAAALDGATPWQAFRLVLLPLSVPILAVVFILSFIGVVGEVPVASLLLSDVNSYTLAVGMQQYLYPQNYLWGDFAAAAVLSALPITIVFLLAQRWLVGGLTAGGVKG</sequence>
<accession>Q7MFC1</accession>